<evidence type="ECO:0000250" key="1">
    <source>
        <dbReference type="UniProtKB" id="P62495"/>
    </source>
</evidence>
<evidence type="ECO:0000305" key="2"/>
<reference key="1">
    <citation type="submission" date="2004-11" db="EMBL/GenBank/DDBJ databases">
        <authorList>
            <consortium name="The German cDNA consortium"/>
        </authorList>
    </citation>
    <scope>NUCLEOTIDE SEQUENCE [LARGE SCALE MRNA]</scope>
    <source>
        <tissue>Brain cortex</tissue>
    </source>
</reference>
<gene>
    <name type="primary">ETF1</name>
</gene>
<dbReference type="EMBL" id="CR861324">
    <property type="protein sequence ID" value="CAH93389.1"/>
    <property type="molecule type" value="mRNA"/>
</dbReference>
<dbReference type="RefSeq" id="NP_001126989.1">
    <property type="nucleotide sequence ID" value="NM_001133517.1"/>
</dbReference>
<dbReference type="BMRB" id="Q5R4C7"/>
<dbReference type="SMR" id="Q5R4C7"/>
<dbReference type="STRING" id="9601.ENSPPYP00000017698"/>
<dbReference type="GeneID" id="100174012"/>
<dbReference type="KEGG" id="pon:100174012"/>
<dbReference type="CTD" id="2107"/>
<dbReference type="eggNOG" id="KOG0688">
    <property type="taxonomic scope" value="Eukaryota"/>
</dbReference>
<dbReference type="InParanoid" id="Q5R4C7"/>
<dbReference type="OrthoDB" id="10254527at2759"/>
<dbReference type="Proteomes" id="UP000001595">
    <property type="component" value="Unplaced"/>
</dbReference>
<dbReference type="GO" id="GO:0005737">
    <property type="term" value="C:cytoplasm"/>
    <property type="evidence" value="ECO:0000250"/>
    <property type="project" value="UniProtKB"/>
</dbReference>
<dbReference type="GO" id="GO:0003747">
    <property type="term" value="F:translation release factor activity"/>
    <property type="evidence" value="ECO:0007669"/>
    <property type="project" value="InterPro"/>
</dbReference>
<dbReference type="GO" id="GO:0008079">
    <property type="term" value="F:translation termination factor activity"/>
    <property type="evidence" value="ECO:0000250"/>
    <property type="project" value="UniProtKB"/>
</dbReference>
<dbReference type="GO" id="GO:0000184">
    <property type="term" value="P:nuclear-transcribed mRNA catabolic process, nonsense-mediated decay"/>
    <property type="evidence" value="ECO:0007669"/>
    <property type="project" value="UniProtKB-KW"/>
</dbReference>
<dbReference type="GO" id="GO:0006449">
    <property type="term" value="P:regulation of translational termination"/>
    <property type="evidence" value="ECO:0000250"/>
    <property type="project" value="UniProtKB"/>
</dbReference>
<dbReference type="FunFam" id="3.30.1330.30:FF:000009">
    <property type="entry name" value="Eukaryotic peptide chain release factor subunit 1"/>
    <property type="match status" value="1"/>
</dbReference>
<dbReference type="FunFam" id="3.30.420.60:FF:000001">
    <property type="entry name" value="Eukaryotic peptide chain release factor subunit 1"/>
    <property type="match status" value="1"/>
</dbReference>
<dbReference type="FunFam" id="3.30.960.10:FF:000001">
    <property type="entry name" value="Eukaryotic peptide chain release factor subunit 1"/>
    <property type="match status" value="1"/>
</dbReference>
<dbReference type="Gene3D" id="3.30.1330.30">
    <property type="match status" value="1"/>
</dbReference>
<dbReference type="Gene3D" id="3.30.960.10">
    <property type="entry name" value="eRF1 domain 1"/>
    <property type="match status" value="1"/>
</dbReference>
<dbReference type="Gene3D" id="3.30.420.60">
    <property type="entry name" value="eRF1 domain 2"/>
    <property type="match status" value="1"/>
</dbReference>
<dbReference type="InterPro" id="IPR042226">
    <property type="entry name" value="eFR1_2_sf"/>
</dbReference>
<dbReference type="InterPro" id="IPR005140">
    <property type="entry name" value="eRF1_1_Pelota"/>
</dbReference>
<dbReference type="InterPro" id="IPR024049">
    <property type="entry name" value="eRF1_1_sf"/>
</dbReference>
<dbReference type="InterPro" id="IPR005141">
    <property type="entry name" value="eRF1_2"/>
</dbReference>
<dbReference type="InterPro" id="IPR005142">
    <property type="entry name" value="eRF1_3"/>
</dbReference>
<dbReference type="InterPro" id="IPR004403">
    <property type="entry name" value="Peptide_chain-rel_eRF1/aRF1"/>
</dbReference>
<dbReference type="InterPro" id="IPR029064">
    <property type="entry name" value="Ribosomal_eL30-like_sf"/>
</dbReference>
<dbReference type="NCBIfam" id="TIGR03676">
    <property type="entry name" value="aRF1_eRF1"/>
    <property type="match status" value="1"/>
</dbReference>
<dbReference type="PANTHER" id="PTHR10113">
    <property type="entry name" value="PEPTIDE CHAIN RELEASE FACTOR SUBUNIT 1"/>
    <property type="match status" value="1"/>
</dbReference>
<dbReference type="Pfam" id="PF03463">
    <property type="entry name" value="eRF1_1"/>
    <property type="match status" value="1"/>
</dbReference>
<dbReference type="Pfam" id="PF03464">
    <property type="entry name" value="eRF1_2"/>
    <property type="match status" value="1"/>
</dbReference>
<dbReference type="Pfam" id="PF03465">
    <property type="entry name" value="eRF1_3"/>
    <property type="match status" value="1"/>
</dbReference>
<dbReference type="SMART" id="SM01194">
    <property type="entry name" value="eRF1_1"/>
    <property type="match status" value="1"/>
</dbReference>
<dbReference type="SUPFAM" id="SSF55315">
    <property type="entry name" value="L30e-like"/>
    <property type="match status" value="1"/>
</dbReference>
<dbReference type="SUPFAM" id="SSF55481">
    <property type="entry name" value="N-terminal domain of eukaryotic peptide chain release factor subunit 1, ERF1"/>
    <property type="match status" value="1"/>
</dbReference>
<dbReference type="SUPFAM" id="SSF53137">
    <property type="entry name" value="Translational machinery components"/>
    <property type="match status" value="1"/>
</dbReference>
<protein>
    <recommendedName>
        <fullName>Eukaryotic peptide chain release factor subunit 1</fullName>
        <shortName>Eukaryotic release factor 1</shortName>
        <shortName>eRF1</shortName>
    </recommendedName>
</protein>
<name>ERF1_PONAB</name>
<feature type="initiator methionine" description="Removed" evidence="1">
    <location>
        <position position="1"/>
    </location>
</feature>
<feature type="chain" id="PRO_0000143141" description="Eukaryotic peptide chain release factor subunit 1">
    <location>
        <begin position="2"/>
        <end position="437"/>
    </location>
</feature>
<feature type="short sequence motif" description="NIKS motif; plays an important role in translational termination" evidence="1">
    <location>
        <begin position="61"/>
        <end position="64"/>
    </location>
</feature>
<feature type="modified residue" description="N-acetylalanine" evidence="1">
    <location>
        <position position="2"/>
    </location>
</feature>
<feature type="modified residue" description="4-hydroxylysine" evidence="1">
    <location>
        <position position="63"/>
    </location>
</feature>
<feature type="modified residue" description="N5-methylglutamine" evidence="1">
    <location>
        <position position="185"/>
    </location>
</feature>
<feature type="modified residue" description="Phosphothreonine" evidence="1">
    <location>
        <position position="347"/>
    </location>
</feature>
<feature type="cross-link" description="Glycyl lysine isopeptide (Lys-Gly) (interchain with G-Cter in SUMO2)" evidence="1">
    <location>
        <position position="87"/>
    </location>
</feature>
<feature type="cross-link" description="Glycyl lysine isopeptide (Lys-Gly) (interchain with G-Cter in SUMO2)" evidence="1">
    <location>
        <position position="404"/>
    </location>
</feature>
<sequence length="437" mass="48973">MADDPSAADRNVEIWKIKKLIKSLEAARGNGTSMISLIIPPKDQISRVAKMLADEFGTASNIKSRVNRLSVLGAITSVQQRLKLYNKVPPNGLVVYCGTIVTEEGKEKKVNIDFEPFKPINTSLYLCDNKFHTEALTALLSDDSKFGFIVIDGSGALFGTLQGNTREVLHKFTVDLPKKHGRGGQSALRFARLRMEKRHNYVRKVAETAVQLFISGDKVNVAGLVLAGSADFKTELSQSDMFDQRLQSKVLKLVDISYGGENGFNQAIELSTEVLSNVKFIQEKKLIGRYFGEISQDTGKYCFGVEDTLKALEMGAVEILIVYENLDIMRYVLHCQGTEEEKILYLTPEQEKDKSHFTDKETGQEHELIESMPLLEWFANNYKKFGATLEIVTDKSQEGSQFVKGFGGIGGILRYRVDFQGMEYQGGDDEFFDLDDY</sequence>
<accession>Q5R4C7</accession>
<organism>
    <name type="scientific">Pongo abelii</name>
    <name type="common">Sumatran orangutan</name>
    <name type="synonym">Pongo pygmaeus abelii</name>
    <dbReference type="NCBI Taxonomy" id="9601"/>
    <lineage>
        <taxon>Eukaryota</taxon>
        <taxon>Metazoa</taxon>
        <taxon>Chordata</taxon>
        <taxon>Craniata</taxon>
        <taxon>Vertebrata</taxon>
        <taxon>Euteleostomi</taxon>
        <taxon>Mammalia</taxon>
        <taxon>Eutheria</taxon>
        <taxon>Euarchontoglires</taxon>
        <taxon>Primates</taxon>
        <taxon>Haplorrhini</taxon>
        <taxon>Catarrhini</taxon>
        <taxon>Hominidae</taxon>
        <taxon>Pongo</taxon>
    </lineage>
</organism>
<keyword id="KW-0007">Acetylation</keyword>
<keyword id="KW-0963">Cytoplasm</keyword>
<keyword id="KW-0379">Hydroxylation</keyword>
<keyword id="KW-1017">Isopeptide bond</keyword>
<keyword id="KW-0488">Methylation</keyword>
<keyword id="KW-0866">Nonsense-mediated mRNA decay</keyword>
<keyword id="KW-0597">Phosphoprotein</keyword>
<keyword id="KW-0648">Protein biosynthesis</keyword>
<keyword id="KW-1185">Reference proteome</keyword>
<keyword id="KW-0832">Ubl conjugation</keyword>
<proteinExistence type="evidence at transcript level"/>
<comment type="function">
    <text evidence="1">Component of the eRF1-eRF3-GTP ternary complex, a ternary complex that mediates translation termination in response to the termination codons. The eRF1-eRF3-GTP complex binds to a stop codon in the ribosomal A-site. ETF1/ERF1 is responsible for stop codon recognition and inducing hydrolysis of peptidyl-tRNA. Following GTP hydrolysis, eRF3 (GSPT1/ERF3A or GSPT2/ERF3B) dissociates, permitting ETF1/eRF1 to accommodate fully in the A-site, followed by hydrolysis of peptidyl-tRNA. Component of the transient SURF complex which recruits UPF1 to stalled ribosomes in the context of nonsense-mediated decay (NMD) of mRNAs containing premature stop codons. Required for SHFL-mediated translation termination which inhibits programmed ribosomal frameshifting (-1PRF) of mRNA from viruses and cellular genes.</text>
</comment>
<comment type="subunit">
    <text evidence="1">Component of the eRF1-eRF3-GTP ternary complex, composed of ETF1/ERF1 and eRF3 (GSPT1/ERF3A or GSPT2/ERF3B) and GTP. Component of the transient SURF (SMG1-UPF1-eRF1-eRF3) complex. Interacts with JMJD4. The ETF1-GSPT1 complex interacts with JMJD4.</text>
</comment>
<comment type="subcellular location">
    <subcellularLocation>
        <location evidence="1">Cytoplasm</location>
    </subcellularLocation>
</comment>
<comment type="PTM">
    <text evidence="1">Hydroxylation at Lys-63 by JMJD4 promotes its translational termination efficiency.</text>
</comment>
<comment type="PTM">
    <text evidence="1">Methylated at Gln-185 by N6AMT1.</text>
</comment>
<comment type="PTM">
    <text evidence="1">Ubiquitinated via 'Lys-6'-linked polyubiquitin chains by RNF14 and RNF25 in response to ribosome collisions (ribosome stalling), leading to its degradation by the proteasome and rescue of stalled ribosomes.</text>
</comment>
<comment type="similarity">
    <text evidence="2">Belongs to the eukaryotic release factor 1 family.</text>
</comment>